<evidence type="ECO:0000250" key="1"/>
<evidence type="ECO:0000250" key="2">
    <source>
        <dbReference type="UniProtKB" id="P50171"/>
    </source>
</evidence>
<evidence type="ECO:0000250" key="3">
    <source>
        <dbReference type="UniProtKB" id="Q92506"/>
    </source>
</evidence>
<evidence type="ECO:0000255" key="4">
    <source>
        <dbReference type="PROSITE-ProRule" id="PRU10001"/>
    </source>
</evidence>
<evidence type="ECO:0000305" key="5"/>
<accession>Q9GME3</accession>
<gene>
    <name type="primary">HSD17B8</name>
</gene>
<protein>
    <recommendedName>
        <fullName>Estradiol 17-beta-dehydrogenase 8</fullName>
        <ecNumber>1.1.1.62</ecNumber>
    </recommendedName>
    <alternativeName>
        <fullName>17-beta-hydroxysteroid dehydrogenase 8</fullName>
        <shortName>17-beta-HSD 8</shortName>
    </alternativeName>
    <alternativeName>
        <fullName evidence="3">3-ketoacyl-[acyl-carrier-protein] reductase alpha subunit</fullName>
        <shortName evidence="3">KAR alpha subunit</shortName>
    </alternativeName>
    <alternativeName>
        <fullName>3-oxoacyl-[acyl-carrier-protein] reductase</fullName>
        <ecNumber evidence="3">1.1.1.-</ecNumber>
    </alternativeName>
    <alternativeName>
        <fullName>Testosterone 17-beta-dehydrogenase 8</fullName>
        <ecNumber>1.1.1.239</ecNumber>
    </alternativeName>
</protein>
<comment type="function">
    <text evidence="3">NAD-dependent 17-beta-hydroxysteroid dehydrogenase with highest activity towards estradiol. Has very low activity towards testosterone. The heterotetramer with CBR4 has NADH-dependent 3-ketoacyl-acyl carrier protein reductase activity, and thereby plays a role in mitochondrial fatty acid biosynthesis. Within the heterotetramer, HSD17B8 binds NADH; CBR4 binds NADPD.</text>
</comment>
<comment type="catalytic activity">
    <reaction evidence="3">
        <text>17beta-estradiol + NAD(+) = estrone + NADH + H(+)</text>
        <dbReference type="Rhea" id="RHEA:24612"/>
        <dbReference type="ChEBI" id="CHEBI:15378"/>
        <dbReference type="ChEBI" id="CHEBI:16469"/>
        <dbReference type="ChEBI" id="CHEBI:17263"/>
        <dbReference type="ChEBI" id="CHEBI:57540"/>
        <dbReference type="ChEBI" id="CHEBI:57945"/>
        <dbReference type="EC" id="1.1.1.62"/>
    </reaction>
</comment>
<comment type="catalytic activity">
    <reaction evidence="3">
        <text>17beta-estradiol + NADP(+) = estrone + NADPH + H(+)</text>
        <dbReference type="Rhea" id="RHEA:24616"/>
        <dbReference type="ChEBI" id="CHEBI:15378"/>
        <dbReference type="ChEBI" id="CHEBI:16469"/>
        <dbReference type="ChEBI" id="CHEBI:17263"/>
        <dbReference type="ChEBI" id="CHEBI:57783"/>
        <dbReference type="ChEBI" id="CHEBI:58349"/>
        <dbReference type="EC" id="1.1.1.62"/>
    </reaction>
</comment>
<comment type="catalytic activity">
    <reaction evidence="3">
        <text>testosterone + NAD(+) = androst-4-ene-3,17-dione + NADH + H(+)</text>
        <dbReference type="Rhea" id="RHEA:14929"/>
        <dbReference type="ChEBI" id="CHEBI:15378"/>
        <dbReference type="ChEBI" id="CHEBI:16422"/>
        <dbReference type="ChEBI" id="CHEBI:17347"/>
        <dbReference type="ChEBI" id="CHEBI:57540"/>
        <dbReference type="ChEBI" id="CHEBI:57945"/>
        <dbReference type="EC" id="1.1.1.239"/>
    </reaction>
</comment>
<comment type="pathway">
    <text evidence="3">Steroid biosynthesis; estrogen biosynthesis.</text>
</comment>
<comment type="pathway">
    <text evidence="3">Lipid metabolism; fatty acid biosynthesis.</text>
</comment>
<comment type="subunit">
    <text evidence="3">Heterotetramer with CBR4; contains two molecules of HSD17B8 and CBR4.</text>
</comment>
<comment type="subcellular location">
    <subcellularLocation>
        <location evidence="3">Mitochondrion matrix</location>
    </subcellularLocation>
</comment>
<comment type="similarity">
    <text evidence="5">Belongs to the short-chain dehydrogenases/reductases (SDR) family.</text>
</comment>
<name>DHB8_CALJA</name>
<organism>
    <name type="scientific">Callithrix jacchus</name>
    <name type="common">White-tufted-ear marmoset</name>
    <dbReference type="NCBI Taxonomy" id="9483"/>
    <lineage>
        <taxon>Eukaryota</taxon>
        <taxon>Metazoa</taxon>
        <taxon>Chordata</taxon>
        <taxon>Craniata</taxon>
        <taxon>Vertebrata</taxon>
        <taxon>Euteleostomi</taxon>
        <taxon>Mammalia</taxon>
        <taxon>Eutheria</taxon>
        <taxon>Euarchontoglires</taxon>
        <taxon>Primates</taxon>
        <taxon>Haplorrhini</taxon>
        <taxon>Platyrrhini</taxon>
        <taxon>Cebidae</taxon>
        <taxon>Callitrichinae</taxon>
        <taxon>Callithrix</taxon>
        <taxon>Callithrix</taxon>
    </lineage>
</organism>
<feature type="chain" id="PRO_0000054596" description="Estradiol 17-beta-dehydrogenase 8">
    <location>
        <begin position="1" status="less than"/>
        <end position="134" status="greater than"/>
    </location>
</feature>
<feature type="active site" description="Proton acceptor" evidence="4">
    <location>
        <position position="51"/>
    </location>
</feature>
<feature type="binding site" evidence="1">
    <location>
        <position position="38"/>
    </location>
    <ligand>
        <name>substrate</name>
    </ligand>
</feature>
<feature type="binding site" evidence="3">
    <location>
        <begin position="51"/>
        <end position="55"/>
    </location>
    <ligand>
        <name>NAD(+)</name>
        <dbReference type="ChEBI" id="CHEBI:57540"/>
    </ligand>
</feature>
<feature type="binding site" evidence="3">
    <location>
        <begin position="84"/>
        <end position="86"/>
    </location>
    <ligand>
        <name>NAD(+)</name>
        <dbReference type="ChEBI" id="CHEBI:57540"/>
    </ligand>
</feature>
<feature type="modified residue" description="N6-succinyllysine" evidence="2">
    <location>
        <position position="42"/>
    </location>
</feature>
<feature type="modified residue" description="N6-succinyllysine" evidence="2">
    <location>
        <position position="55"/>
    </location>
</feature>
<feature type="non-terminal residue">
    <location>
        <position position="1"/>
    </location>
</feature>
<feature type="non-terminal residue">
    <location>
        <position position="134"/>
    </location>
</feature>
<keyword id="KW-0275">Fatty acid biosynthesis</keyword>
<keyword id="KW-0276">Fatty acid metabolism</keyword>
<keyword id="KW-0444">Lipid biosynthesis</keyword>
<keyword id="KW-0443">Lipid metabolism</keyword>
<keyword id="KW-0496">Mitochondrion</keyword>
<keyword id="KW-0520">NAD</keyword>
<keyword id="KW-0560">Oxidoreductase</keyword>
<keyword id="KW-1185">Reference proteome</keyword>
<keyword id="KW-0752">Steroid biosynthesis</keyword>
<reference key="1">
    <citation type="journal article" date="2001" name="Mol. Cell. Endocrinol.">
        <title>Mechanisms of estradiol inactivation in primate endometrium.</title>
        <authorList>
            <person name="Husen B."/>
            <person name="Adamski J."/>
            <person name="Rune G.M."/>
            <person name="Einspanier A."/>
        </authorList>
    </citation>
    <scope>NUCLEOTIDE SEQUENCE [MRNA]</scope>
</reference>
<dbReference type="EC" id="1.1.1.62"/>
<dbReference type="EC" id="1.1.1.-" evidence="3"/>
<dbReference type="EC" id="1.1.1.239"/>
<dbReference type="EMBL" id="AF272012">
    <property type="protein sequence ID" value="AAG01114.1"/>
    <property type="molecule type" value="mRNA"/>
</dbReference>
<dbReference type="SMR" id="Q9GME3"/>
<dbReference type="STRING" id="9483.ENSCJAP00000058291"/>
<dbReference type="eggNOG" id="KOG1200">
    <property type="taxonomic scope" value="Eukaryota"/>
</dbReference>
<dbReference type="HOGENOM" id="CLU_010194_1_3_1"/>
<dbReference type="InParanoid" id="Q9GME3"/>
<dbReference type="UniPathway" id="UPA00094"/>
<dbReference type="UniPathway" id="UPA00769"/>
<dbReference type="Proteomes" id="UP000008225">
    <property type="component" value="Unplaced"/>
</dbReference>
<dbReference type="GO" id="GO:0005759">
    <property type="term" value="C:mitochondrial matrix"/>
    <property type="evidence" value="ECO:0007669"/>
    <property type="project" value="UniProtKB-SubCell"/>
</dbReference>
<dbReference type="GO" id="GO:0106386">
    <property type="term" value="F:(3R)-hydroxyacyl-CoA dehydrogenase (NAD+) activity"/>
    <property type="evidence" value="ECO:0000250"/>
    <property type="project" value="UniProtKB"/>
</dbReference>
<dbReference type="GO" id="GO:0004303">
    <property type="term" value="F:estradiol 17-beta-dehydrogenase [NAD(P)+] activity"/>
    <property type="evidence" value="ECO:0000250"/>
    <property type="project" value="UniProtKB"/>
</dbReference>
<dbReference type="GO" id="GO:0070404">
    <property type="term" value="F:NADH binding"/>
    <property type="evidence" value="ECO:0000250"/>
    <property type="project" value="UniProtKB"/>
</dbReference>
<dbReference type="GO" id="GO:0048038">
    <property type="term" value="F:quinone binding"/>
    <property type="evidence" value="ECO:0007669"/>
    <property type="project" value="TreeGrafter"/>
</dbReference>
<dbReference type="GO" id="GO:0047035">
    <property type="term" value="F:testosterone dehydrogenase (NAD+) activity"/>
    <property type="evidence" value="ECO:0007669"/>
    <property type="project" value="UniProtKB-EC"/>
</dbReference>
<dbReference type="GO" id="GO:0006703">
    <property type="term" value="P:estrogen biosynthetic process"/>
    <property type="evidence" value="ECO:0000250"/>
    <property type="project" value="UniProtKB"/>
</dbReference>
<dbReference type="GO" id="GO:0006633">
    <property type="term" value="P:fatty acid biosynthetic process"/>
    <property type="evidence" value="ECO:0000250"/>
    <property type="project" value="UniProtKB"/>
</dbReference>
<dbReference type="GO" id="GO:0051290">
    <property type="term" value="P:protein heterotetramerization"/>
    <property type="evidence" value="ECO:0000250"/>
    <property type="project" value="UniProtKB"/>
</dbReference>
<dbReference type="Gene3D" id="3.40.50.720">
    <property type="entry name" value="NAD(P)-binding Rossmann-like Domain"/>
    <property type="match status" value="1"/>
</dbReference>
<dbReference type="InterPro" id="IPR036291">
    <property type="entry name" value="NAD(P)-bd_dom_sf"/>
</dbReference>
<dbReference type="InterPro" id="IPR020904">
    <property type="entry name" value="Sc_DH/Rdtase_CS"/>
</dbReference>
<dbReference type="InterPro" id="IPR002347">
    <property type="entry name" value="SDR_fam"/>
</dbReference>
<dbReference type="PANTHER" id="PTHR42760:SF83">
    <property type="entry name" value="(3R)-3-HYDROXYACYL-COA DEHYDROGENASE"/>
    <property type="match status" value="1"/>
</dbReference>
<dbReference type="PANTHER" id="PTHR42760">
    <property type="entry name" value="SHORT-CHAIN DEHYDROGENASES/REDUCTASES FAMILY MEMBER"/>
    <property type="match status" value="1"/>
</dbReference>
<dbReference type="Pfam" id="PF13561">
    <property type="entry name" value="adh_short_C2"/>
    <property type="match status" value="1"/>
</dbReference>
<dbReference type="PRINTS" id="PR00081">
    <property type="entry name" value="GDHRDH"/>
</dbReference>
<dbReference type="PRINTS" id="PR00080">
    <property type="entry name" value="SDRFAMILY"/>
</dbReference>
<dbReference type="SUPFAM" id="SSF51735">
    <property type="entry name" value="NAD(P)-binding Rossmann-fold domains"/>
    <property type="match status" value="1"/>
</dbReference>
<dbReference type="PROSITE" id="PS00061">
    <property type="entry name" value="ADH_SHORT"/>
    <property type="match status" value="1"/>
</dbReference>
<sequence>DWDKVIAVNLKGTFLVTQAAGQALVSSGCSGSIINISSIVGKVGNMGQTNYAASKAGVIGLTQTAARELGRHGIRCNSVLPGFIATPMTQKVPQKVMNKITGMIPMGHLGDPEDVADVVAFLASEDSGYITGAS</sequence>
<proteinExistence type="evidence at transcript level"/>